<gene>
    <name evidence="1" type="primary">rpmC</name>
    <name type="ordered locus">DIP0481</name>
</gene>
<keyword id="KW-1185">Reference proteome</keyword>
<keyword id="KW-0687">Ribonucleoprotein</keyword>
<keyword id="KW-0689">Ribosomal protein</keyword>
<proteinExistence type="inferred from homology"/>
<evidence type="ECO:0000255" key="1">
    <source>
        <dbReference type="HAMAP-Rule" id="MF_00374"/>
    </source>
</evidence>
<evidence type="ECO:0000305" key="2"/>
<reference key="1">
    <citation type="journal article" date="2003" name="Nucleic Acids Res.">
        <title>The complete genome sequence and analysis of Corynebacterium diphtheriae NCTC13129.</title>
        <authorList>
            <person name="Cerdeno-Tarraga A.-M."/>
            <person name="Efstratiou A."/>
            <person name="Dover L.G."/>
            <person name="Holden M.T.G."/>
            <person name="Pallen M.J."/>
            <person name="Bentley S.D."/>
            <person name="Besra G.S."/>
            <person name="Churcher C.M."/>
            <person name="James K.D."/>
            <person name="De Zoysa A."/>
            <person name="Chillingworth T."/>
            <person name="Cronin A."/>
            <person name="Dowd L."/>
            <person name="Feltwell T."/>
            <person name="Hamlin N."/>
            <person name="Holroyd S."/>
            <person name="Jagels K."/>
            <person name="Moule S."/>
            <person name="Quail M.A."/>
            <person name="Rabbinowitsch E."/>
            <person name="Rutherford K.M."/>
            <person name="Thomson N.R."/>
            <person name="Unwin L."/>
            <person name="Whitehead S."/>
            <person name="Barrell B.G."/>
            <person name="Parkhill J."/>
        </authorList>
    </citation>
    <scope>NUCLEOTIDE SEQUENCE [LARGE SCALE GENOMIC DNA]</scope>
    <source>
        <strain>ATCC 700971 / NCTC 13129 / Biotype gravis</strain>
    </source>
</reference>
<organism>
    <name type="scientific">Corynebacterium diphtheriae (strain ATCC 700971 / NCTC 13129 / Biotype gravis)</name>
    <dbReference type="NCBI Taxonomy" id="257309"/>
    <lineage>
        <taxon>Bacteria</taxon>
        <taxon>Bacillati</taxon>
        <taxon>Actinomycetota</taxon>
        <taxon>Actinomycetes</taxon>
        <taxon>Mycobacteriales</taxon>
        <taxon>Corynebacteriaceae</taxon>
        <taxon>Corynebacterium</taxon>
    </lineage>
</organism>
<sequence>MANGTPAHELRELNAEELKTRLTEAKEELFNLRFQAATGQLTNNRRLRTVKRDIARIYTVIRERELGLSEVPGAEA</sequence>
<dbReference type="EMBL" id="BX248355">
    <property type="protein sequence ID" value="CAE48990.1"/>
    <property type="molecule type" value="Genomic_DNA"/>
</dbReference>
<dbReference type="RefSeq" id="WP_004566751.1">
    <property type="nucleotide sequence ID" value="NC_002935.2"/>
</dbReference>
<dbReference type="SMR" id="Q6NJC7"/>
<dbReference type="STRING" id="257309.DIP0481"/>
<dbReference type="GeneID" id="97331084"/>
<dbReference type="KEGG" id="cdi:DIP0481"/>
<dbReference type="HOGENOM" id="CLU_158491_3_3_11"/>
<dbReference type="Proteomes" id="UP000002198">
    <property type="component" value="Chromosome"/>
</dbReference>
<dbReference type="GO" id="GO:0022625">
    <property type="term" value="C:cytosolic large ribosomal subunit"/>
    <property type="evidence" value="ECO:0007669"/>
    <property type="project" value="TreeGrafter"/>
</dbReference>
<dbReference type="GO" id="GO:0003735">
    <property type="term" value="F:structural constituent of ribosome"/>
    <property type="evidence" value="ECO:0007669"/>
    <property type="project" value="InterPro"/>
</dbReference>
<dbReference type="GO" id="GO:0006412">
    <property type="term" value="P:translation"/>
    <property type="evidence" value="ECO:0007669"/>
    <property type="project" value="UniProtKB-UniRule"/>
</dbReference>
<dbReference type="CDD" id="cd00427">
    <property type="entry name" value="Ribosomal_L29_HIP"/>
    <property type="match status" value="1"/>
</dbReference>
<dbReference type="FunFam" id="1.10.287.310:FF:000001">
    <property type="entry name" value="50S ribosomal protein L29"/>
    <property type="match status" value="1"/>
</dbReference>
<dbReference type="Gene3D" id="1.10.287.310">
    <property type="match status" value="1"/>
</dbReference>
<dbReference type="HAMAP" id="MF_00374">
    <property type="entry name" value="Ribosomal_uL29"/>
    <property type="match status" value="1"/>
</dbReference>
<dbReference type="InterPro" id="IPR050063">
    <property type="entry name" value="Ribosomal_protein_uL29"/>
</dbReference>
<dbReference type="InterPro" id="IPR001854">
    <property type="entry name" value="Ribosomal_uL29"/>
</dbReference>
<dbReference type="InterPro" id="IPR018254">
    <property type="entry name" value="Ribosomal_uL29_CS"/>
</dbReference>
<dbReference type="InterPro" id="IPR036049">
    <property type="entry name" value="Ribosomal_uL29_sf"/>
</dbReference>
<dbReference type="NCBIfam" id="TIGR00012">
    <property type="entry name" value="L29"/>
    <property type="match status" value="1"/>
</dbReference>
<dbReference type="PANTHER" id="PTHR10916">
    <property type="entry name" value="60S RIBOSOMAL PROTEIN L35/50S RIBOSOMAL PROTEIN L29"/>
    <property type="match status" value="1"/>
</dbReference>
<dbReference type="PANTHER" id="PTHR10916:SF0">
    <property type="entry name" value="LARGE RIBOSOMAL SUBUNIT PROTEIN UL29C"/>
    <property type="match status" value="1"/>
</dbReference>
<dbReference type="Pfam" id="PF00831">
    <property type="entry name" value="Ribosomal_L29"/>
    <property type="match status" value="1"/>
</dbReference>
<dbReference type="SUPFAM" id="SSF46561">
    <property type="entry name" value="Ribosomal protein L29 (L29p)"/>
    <property type="match status" value="1"/>
</dbReference>
<dbReference type="PROSITE" id="PS00579">
    <property type="entry name" value="RIBOSOMAL_L29"/>
    <property type="match status" value="1"/>
</dbReference>
<accession>Q6NJC7</accession>
<feature type="chain" id="PRO_0000130379" description="Large ribosomal subunit protein uL29">
    <location>
        <begin position="1"/>
        <end position="76"/>
    </location>
</feature>
<name>RL29_CORDI</name>
<comment type="similarity">
    <text evidence="1">Belongs to the universal ribosomal protein uL29 family.</text>
</comment>
<protein>
    <recommendedName>
        <fullName evidence="1">Large ribosomal subunit protein uL29</fullName>
    </recommendedName>
    <alternativeName>
        <fullName evidence="2">50S ribosomal protein L29</fullName>
    </alternativeName>
</protein>